<evidence type="ECO:0000255" key="1">
    <source>
        <dbReference type="HAMAP-Rule" id="MF_01325"/>
    </source>
</evidence>
<evidence type="ECO:0000256" key="2">
    <source>
        <dbReference type="SAM" id="MobiDB-lite"/>
    </source>
</evidence>
<evidence type="ECO:0000305" key="3"/>
<gene>
    <name evidence="1" type="primary">rplC</name>
    <name type="ordered locus">CMM_2617</name>
</gene>
<organism>
    <name type="scientific">Clavibacter michiganensis subsp. michiganensis (strain NCPPB 382)</name>
    <dbReference type="NCBI Taxonomy" id="443906"/>
    <lineage>
        <taxon>Bacteria</taxon>
        <taxon>Bacillati</taxon>
        <taxon>Actinomycetota</taxon>
        <taxon>Actinomycetes</taxon>
        <taxon>Micrococcales</taxon>
        <taxon>Microbacteriaceae</taxon>
        <taxon>Clavibacter</taxon>
    </lineage>
</organism>
<proteinExistence type="inferred from homology"/>
<keyword id="KW-0687">Ribonucleoprotein</keyword>
<keyword id="KW-0689">Ribosomal protein</keyword>
<keyword id="KW-0694">RNA-binding</keyword>
<keyword id="KW-0699">rRNA-binding</keyword>
<protein>
    <recommendedName>
        <fullName evidence="1">Large ribosomal subunit protein uL3</fullName>
    </recommendedName>
    <alternativeName>
        <fullName evidence="3">50S ribosomal protein L3</fullName>
    </alternativeName>
</protein>
<accession>A5CUB3</accession>
<reference key="1">
    <citation type="journal article" date="2008" name="J. Bacteriol.">
        <title>The genome sequence of the tomato-pathogenic actinomycete Clavibacter michiganensis subsp. michiganensis NCPPB382 reveals a large island involved in pathogenicity.</title>
        <authorList>
            <person name="Gartemann K.-H."/>
            <person name="Abt B."/>
            <person name="Bekel T."/>
            <person name="Burger A."/>
            <person name="Engemann J."/>
            <person name="Fluegel M."/>
            <person name="Gaigalat L."/>
            <person name="Goesmann A."/>
            <person name="Graefen I."/>
            <person name="Kalinowski J."/>
            <person name="Kaup O."/>
            <person name="Kirchner O."/>
            <person name="Krause L."/>
            <person name="Linke B."/>
            <person name="McHardy A."/>
            <person name="Meyer F."/>
            <person name="Pohle S."/>
            <person name="Rueckert C."/>
            <person name="Schneiker S."/>
            <person name="Zellermann E.-M."/>
            <person name="Puehler A."/>
            <person name="Eichenlaub R."/>
            <person name="Kaiser O."/>
            <person name="Bartels D."/>
        </authorList>
    </citation>
    <scope>NUCLEOTIDE SEQUENCE [LARGE SCALE GENOMIC DNA]</scope>
    <source>
        <strain>NCPPB 382</strain>
    </source>
</reference>
<name>RL3_CLAM3</name>
<sequence length="217" mass="23185">MSTANRTFTGLLGTKLGMTQVWDENNKLIPVTVVQITPNVVTQVRTPEVDGYGAIQIAYGQIDPRKADKPSTGHFDKAGVTPRRHLTEVRTADFAEYALGQEITVGAFEPGTKVDVVGTSKGKGFAGVMKRHNFKGVSASHGSHRNHRKPGSIGASSTPSRVFKGMRMAGRMGGERVTVLNLVVHSVDAEKGLLLVKGAVPGARGRIVFVRNAVKGK</sequence>
<dbReference type="EMBL" id="AM711867">
    <property type="protein sequence ID" value="CAN02700.1"/>
    <property type="molecule type" value="Genomic_DNA"/>
</dbReference>
<dbReference type="RefSeq" id="WP_012039306.1">
    <property type="nucleotide sequence ID" value="NC_009480.1"/>
</dbReference>
<dbReference type="SMR" id="A5CUB3"/>
<dbReference type="KEGG" id="cmi:CMM_2617"/>
<dbReference type="eggNOG" id="COG0087">
    <property type="taxonomic scope" value="Bacteria"/>
</dbReference>
<dbReference type="HOGENOM" id="CLU_044142_4_1_11"/>
<dbReference type="OrthoDB" id="9806135at2"/>
<dbReference type="Proteomes" id="UP000001564">
    <property type="component" value="Chromosome"/>
</dbReference>
<dbReference type="GO" id="GO:0022625">
    <property type="term" value="C:cytosolic large ribosomal subunit"/>
    <property type="evidence" value="ECO:0007669"/>
    <property type="project" value="TreeGrafter"/>
</dbReference>
<dbReference type="GO" id="GO:0019843">
    <property type="term" value="F:rRNA binding"/>
    <property type="evidence" value="ECO:0007669"/>
    <property type="project" value="UniProtKB-UniRule"/>
</dbReference>
<dbReference type="GO" id="GO:0003735">
    <property type="term" value="F:structural constituent of ribosome"/>
    <property type="evidence" value="ECO:0007669"/>
    <property type="project" value="InterPro"/>
</dbReference>
<dbReference type="GO" id="GO:0006412">
    <property type="term" value="P:translation"/>
    <property type="evidence" value="ECO:0007669"/>
    <property type="project" value="UniProtKB-UniRule"/>
</dbReference>
<dbReference type="FunFam" id="2.40.30.10:FF:000004">
    <property type="entry name" value="50S ribosomal protein L3"/>
    <property type="match status" value="1"/>
</dbReference>
<dbReference type="FunFam" id="3.30.160.810:FF:000001">
    <property type="entry name" value="50S ribosomal protein L3"/>
    <property type="match status" value="1"/>
</dbReference>
<dbReference type="Gene3D" id="3.30.160.810">
    <property type="match status" value="1"/>
</dbReference>
<dbReference type="Gene3D" id="2.40.30.10">
    <property type="entry name" value="Translation factors"/>
    <property type="match status" value="1"/>
</dbReference>
<dbReference type="HAMAP" id="MF_01325_B">
    <property type="entry name" value="Ribosomal_uL3_B"/>
    <property type="match status" value="1"/>
</dbReference>
<dbReference type="InterPro" id="IPR000597">
    <property type="entry name" value="Ribosomal_uL3"/>
</dbReference>
<dbReference type="InterPro" id="IPR019927">
    <property type="entry name" value="Ribosomal_uL3_bac/org-type"/>
</dbReference>
<dbReference type="InterPro" id="IPR019926">
    <property type="entry name" value="Ribosomal_uL3_CS"/>
</dbReference>
<dbReference type="InterPro" id="IPR009000">
    <property type="entry name" value="Transl_B-barrel_sf"/>
</dbReference>
<dbReference type="NCBIfam" id="TIGR03625">
    <property type="entry name" value="L3_bact"/>
    <property type="match status" value="1"/>
</dbReference>
<dbReference type="PANTHER" id="PTHR11229">
    <property type="entry name" value="50S RIBOSOMAL PROTEIN L3"/>
    <property type="match status" value="1"/>
</dbReference>
<dbReference type="PANTHER" id="PTHR11229:SF16">
    <property type="entry name" value="LARGE RIBOSOMAL SUBUNIT PROTEIN UL3C"/>
    <property type="match status" value="1"/>
</dbReference>
<dbReference type="Pfam" id="PF00297">
    <property type="entry name" value="Ribosomal_L3"/>
    <property type="match status" value="1"/>
</dbReference>
<dbReference type="SUPFAM" id="SSF50447">
    <property type="entry name" value="Translation proteins"/>
    <property type="match status" value="1"/>
</dbReference>
<dbReference type="PROSITE" id="PS00474">
    <property type="entry name" value="RIBOSOMAL_L3"/>
    <property type="match status" value="1"/>
</dbReference>
<feature type="chain" id="PRO_0000353599" description="Large ribosomal subunit protein uL3">
    <location>
        <begin position="1"/>
        <end position="217"/>
    </location>
</feature>
<feature type="region of interest" description="Disordered" evidence="2">
    <location>
        <begin position="137"/>
        <end position="160"/>
    </location>
</feature>
<comment type="function">
    <text evidence="1">One of the primary rRNA binding proteins, it binds directly near the 3'-end of the 23S rRNA, where it nucleates assembly of the 50S subunit.</text>
</comment>
<comment type="subunit">
    <text evidence="1">Part of the 50S ribosomal subunit. Forms a cluster with proteins L14 and L19.</text>
</comment>
<comment type="similarity">
    <text evidence="1">Belongs to the universal ribosomal protein uL3 family.</text>
</comment>